<name>SPYE_ASPFU</name>
<sequence length="357" mass="40419">MVSIPATSLYGLGRQQPFQDLSKSLLTHLNLFTPQEAQSQAVPGTRTETEPTGSSPSDLQEQRKLADDKIIWAPLDYLCSFPGKDIRGKLISAFNQWLQIPEDKLDVIKRVVGLLHSASLLIDDIQDSSKLRRGFPVAHSIFGIAQTINSANFAYFWAQQELKKLGKPEAMVIFTEEMLRLHRGQGLDLYWRDSLTCPTEEEYLEMVANKTGGLFRLAIKLMQMESHNTEDCVPLVDLLGIIFQIRDDYQNLQSDLYAKNKGFGEDITEGKFSYPIIHSIRSDPSNFQLMNILKQKTEDEDVKRYAVRIIESTGSFDHCRKKLENLTAEAREILKDFGDLGNTDGLKGILDFLELKG</sequence>
<comment type="function">
    <text evidence="3">Geranylgeranyl pyrophosphate synthase; part of the gene cluster that mediates the biosynthesis of meroterpenoids called sartorypyrones (PubMed:37860661). Within the pathway, spyE provides the spyF cosubstrate geranylgeranyl pyrophosphate (GGPP) for the prenylation of triacetic acid lactone (TAL) (PubMed:37860661). The biosynthesis of sartorypyrones begins with the production of triacetic acid lactone (TAL) by the NR-PKS spyA using one molecule of acetyl-CoA and two molecules of malonyl-CoA. The prenyltransferase spyF then conjugates geranylgeranyl pyrophosphate (GGPP) to TAL to form geranylgeranyl-triacetate lactone, for which the pathway-specific geranylgeranyl pyrophosphate synthase (GGPS) spyE is required to provide GGPP. Subsequently, geranylgeranyl-triacetate lactone is epoxidized at the terminal olein by the FAD-dependent monooxygenase spyC, followed by cyclization of the terpenoid component catalyzed by the terpene cyclase spyD to produce both the bicyclic sartorypyrone F and the monocyclic sartorypyrone D. Finally, the last step of the biosynthesis involves the acetylation of the meroterpenoids sartorypyrones D and F by the acetyltransferase SpyB to produce sartorypyrones A and G, respectively (PubMed:37860661).</text>
</comment>
<comment type="catalytic activity">
    <reaction evidence="1">
        <text>isopentenyl diphosphate + dimethylallyl diphosphate = (2E)-geranyl diphosphate + diphosphate</text>
        <dbReference type="Rhea" id="RHEA:22408"/>
        <dbReference type="ChEBI" id="CHEBI:33019"/>
        <dbReference type="ChEBI" id="CHEBI:57623"/>
        <dbReference type="ChEBI" id="CHEBI:58057"/>
        <dbReference type="ChEBI" id="CHEBI:128769"/>
        <dbReference type="EC" id="2.5.1.1"/>
    </reaction>
</comment>
<comment type="catalytic activity">
    <reaction evidence="1">
        <text>isopentenyl diphosphate + (2E)-geranyl diphosphate = (2E,6E)-farnesyl diphosphate + diphosphate</text>
        <dbReference type="Rhea" id="RHEA:19361"/>
        <dbReference type="ChEBI" id="CHEBI:33019"/>
        <dbReference type="ChEBI" id="CHEBI:58057"/>
        <dbReference type="ChEBI" id="CHEBI:128769"/>
        <dbReference type="ChEBI" id="CHEBI:175763"/>
        <dbReference type="EC" id="2.5.1.10"/>
    </reaction>
</comment>
<comment type="catalytic activity">
    <reaction evidence="1">
        <text>isopentenyl diphosphate + (2E,6E)-farnesyl diphosphate = (2E,6E,10E)-geranylgeranyl diphosphate + diphosphate</text>
        <dbReference type="Rhea" id="RHEA:17653"/>
        <dbReference type="ChEBI" id="CHEBI:33019"/>
        <dbReference type="ChEBI" id="CHEBI:58756"/>
        <dbReference type="ChEBI" id="CHEBI:128769"/>
        <dbReference type="ChEBI" id="CHEBI:175763"/>
        <dbReference type="EC" id="2.5.1.29"/>
    </reaction>
</comment>
<comment type="cofactor">
    <cofactor evidence="1">
        <name>Mg(2+)</name>
        <dbReference type="ChEBI" id="CHEBI:18420"/>
    </cofactor>
    <text evidence="1">Binds 3 Mg(2+) ions per subunit.</text>
</comment>
<comment type="pathway">
    <text evidence="3">Secondary metabolite biosynthesis; terpenoid biosynthesis.</text>
</comment>
<comment type="disruption phenotype">
    <text evidence="3">Accumulates dihydroxyfarnesyl-triacetate lactone, 17-methoxy-16-hydroxyfarnesyl-triacetate lactone and epoxyfarnesyl- triacetate lactone.</text>
</comment>
<comment type="similarity">
    <text evidence="5">Belongs to the FPP/GGPP synthase family.</text>
</comment>
<proteinExistence type="evidence at protein level"/>
<protein>
    <recommendedName>
        <fullName evidence="4">Geranylgeranyl pyrophosphate synthase spyE</fullName>
        <shortName evidence="5">GGPP synthase</shortName>
        <shortName evidence="5">GGPPSase</shortName>
        <ecNumber evidence="3">2.5.1.-</ecNumber>
    </recommendedName>
    <alternativeName>
        <fullName evidence="1">(2E,6E)-farnesyl diphosphate synthase</fullName>
    </alternativeName>
    <alternativeName>
        <fullName evidence="1">Dimethylallyltranstransferase</fullName>
        <ecNumber evidence="1">2.5.1.1</ecNumber>
    </alternativeName>
    <alternativeName>
        <fullName evidence="1">Farnesyl diphosphate synthase</fullName>
    </alternativeName>
    <alternativeName>
        <fullName evidence="1">Farnesyltranstransferase</fullName>
        <ecNumber evidence="1">2.5.1.29</ecNumber>
    </alternativeName>
    <alternativeName>
        <fullName evidence="1">Geranylgeranyl diphosphate synthase</fullName>
    </alternativeName>
    <alternativeName>
        <fullName evidence="1">Geranyltranstransferase</fullName>
        <ecNumber evidence="1">2.5.1.10</ecNumber>
    </alternativeName>
    <alternativeName>
        <fullName evidence="4">Sartorypyrone biosynthesis cluster protein E</fullName>
    </alternativeName>
</protein>
<evidence type="ECO:0000250" key="1">
    <source>
        <dbReference type="UniProtKB" id="Q12051"/>
    </source>
</evidence>
<evidence type="ECO:0000256" key="2">
    <source>
        <dbReference type="SAM" id="MobiDB-lite"/>
    </source>
</evidence>
<evidence type="ECO:0000269" key="3">
    <source>
    </source>
</evidence>
<evidence type="ECO:0000303" key="4">
    <source>
    </source>
</evidence>
<evidence type="ECO:0000305" key="5"/>
<accession>Q4WBI4</accession>
<dbReference type="EC" id="2.5.1.-" evidence="3"/>
<dbReference type="EC" id="2.5.1.1" evidence="1"/>
<dbReference type="EC" id="2.5.1.29" evidence="1"/>
<dbReference type="EC" id="2.5.1.10" evidence="1"/>
<dbReference type="EMBL" id="AAHF01000014">
    <property type="protein sequence ID" value="EAL84928.1"/>
    <property type="molecule type" value="Genomic_DNA"/>
</dbReference>
<dbReference type="RefSeq" id="XP_746966.1">
    <property type="nucleotide sequence ID" value="XM_741873.1"/>
</dbReference>
<dbReference type="SMR" id="Q4WBI4"/>
<dbReference type="FunCoup" id="Q4WBI4">
    <property type="interactions" value="448"/>
</dbReference>
<dbReference type="STRING" id="330879.Q4WBI4"/>
<dbReference type="EnsemblFungi" id="EAL84928">
    <property type="protein sequence ID" value="EAL84928"/>
    <property type="gene ID" value="AFUA_8G02400"/>
</dbReference>
<dbReference type="GeneID" id="3504515"/>
<dbReference type="KEGG" id="afm:AFUA_8G02400"/>
<dbReference type="VEuPathDB" id="FungiDB:Afu8g02400"/>
<dbReference type="eggNOG" id="KOG0777">
    <property type="taxonomic scope" value="Eukaryota"/>
</dbReference>
<dbReference type="HOGENOM" id="CLU_014015_6_0_1"/>
<dbReference type="InParanoid" id="Q4WBI4"/>
<dbReference type="OMA" id="ANFAYFW"/>
<dbReference type="OrthoDB" id="6921389at2759"/>
<dbReference type="UniPathway" id="UPA00213"/>
<dbReference type="Proteomes" id="UP000002530">
    <property type="component" value="Chromosome 8"/>
</dbReference>
<dbReference type="GO" id="GO:0004337">
    <property type="term" value="F:(2E,6E)-farnesyl diphosphate synthase activity"/>
    <property type="evidence" value="ECO:0007669"/>
    <property type="project" value="RHEA"/>
</dbReference>
<dbReference type="GO" id="GO:0004161">
    <property type="term" value="F:dimethylallyltranstransferase activity"/>
    <property type="evidence" value="ECO:0007669"/>
    <property type="project" value="RHEA"/>
</dbReference>
<dbReference type="GO" id="GO:0004311">
    <property type="term" value="F:geranylgeranyl diphosphate synthase activity"/>
    <property type="evidence" value="ECO:0000318"/>
    <property type="project" value="GO_Central"/>
</dbReference>
<dbReference type="GO" id="GO:0046872">
    <property type="term" value="F:metal ion binding"/>
    <property type="evidence" value="ECO:0007669"/>
    <property type="project" value="UniProtKB-KW"/>
</dbReference>
<dbReference type="GO" id="GO:0046165">
    <property type="term" value="P:alcohol biosynthetic process"/>
    <property type="evidence" value="ECO:0007669"/>
    <property type="project" value="UniProtKB-ARBA"/>
</dbReference>
<dbReference type="GO" id="GO:0008299">
    <property type="term" value="P:isoprenoid biosynthetic process"/>
    <property type="evidence" value="ECO:0000318"/>
    <property type="project" value="GO_Central"/>
</dbReference>
<dbReference type="GO" id="GO:0043386">
    <property type="term" value="P:mycotoxin biosynthetic process"/>
    <property type="evidence" value="ECO:0007669"/>
    <property type="project" value="UniProtKB-ARBA"/>
</dbReference>
<dbReference type="CDD" id="cd00685">
    <property type="entry name" value="Trans_IPPS_HT"/>
    <property type="match status" value="1"/>
</dbReference>
<dbReference type="Gene3D" id="1.10.600.10">
    <property type="entry name" value="Farnesyl Diphosphate Synthase"/>
    <property type="match status" value="1"/>
</dbReference>
<dbReference type="InterPro" id="IPR008949">
    <property type="entry name" value="Isoprenoid_synthase_dom_sf"/>
</dbReference>
<dbReference type="InterPro" id="IPR000092">
    <property type="entry name" value="Polyprenyl_synt"/>
</dbReference>
<dbReference type="InterPro" id="IPR033749">
    <property type="entry name" value="Polyprenyl_synt_CS"/>
</dbReference>
<dbReference type="PANTHER" id="PTHR12001">
    <property type="entry name" value="GERANYLGERANYL PYROPHOSPHATE SYNTHASE"/>
    <property type="match status" value="1"/>
</dbReference>
<dbReference type="PANTHER" id="PTHR12001:SF70">
    <property type="entry name" value="PYROPHOSPHATE SYNTHETASE ATMG, PUTATIVE (AFU_ORTHOLOGUE AFUA_8G02400)-RELATED"/>
    <property type="match status" value="1"/>
</dbReference>
<dbReference type="Pfam" id="PF00348">
    <property type="entry name" value="polyprenyl_synt"/>
    <property type="match status" value="1"/>
</dbReference>
<dbReference type="SFLD" id="SFLDS00005">
    <property type="entry name" value="Isoprenoid_Synthase_Type_I"/>
    <property type="match status" value="1"/>
</dbReference>
<dbReference type="SFLD" id="SFLDG01017">
    <property type="entry name" value="Polyprenyl_Transferase_Like"/>
    <property type="match status" value="1"/>
</dbReference>
<dbReference type="SUPFAM" id="SSF48576">
    <property type="entry name" value="Terpenoid synthases"/>
    <property type="match status" value="1"/>
</dbReference>
<dbReference type="PROSITE" id="PS00723">
    <property type="entry name" value="POLYPRENYL_SYNTHASE_1"/>
    <property type="match status" value="1"/>
</dbReference>
<dbReference type="PROSITE" id="PS00444">
    <property type="entry name" value="POLYPRENYL_SYNTHASE_2"/>
    <property type="match status" value="1"/>
</dbReference>
<keyword id="KW-0460">Magnesium</keyword>
<keyword id="KW-0479">Metal-binding</keyword>
<keyword id="KW-1185">Reference proteome</keyword>
<keyword id="KW-0808">Transferase</keyword>
<gene>
    <name evidence="4" type="primary">spyE</name>
    <name type="ORF">AFUA_8G02400</name>
</gene>
<reference key="1">
    <citation type="journal article" date="2005" name="Nature">
        <title>Genomic sequence of the pathogenic and allergenic filamentous fungus Aspergillus fumigatus.</title>
        <authorList>
            <person name="Nierman W.C."/>
            <person name="Pain A."/>
            <person name="Anderson M.J."/>
            <person name="Wortman J.R."/>
            <person name="Kim H.S."/>
            <person name="Arroyo J."/>
            <person name="Berriman M."/>
            <person name="Abe K."/>
            <person name="Archer D.B."/>
            <person name="Bermejo C."/>
            <person name="Bennett J.W."/>
            <person name="Bowyer P."/>
            <person name="Chen D."/>
            <person name="Collins M."/>
            <person name="Coulsen R."/>
            <person name="Davies R."/>
            <person name="Dyer P.S."/>
            <person name="Farman M.L."/>
            <person name="Fedorova N."/>
            <person name="Fedorova N.D."/>
            <person name="Feldblyum T.V."/>
            <person name="Fischer R."/>
            <person name="Fosker N."/>
            <person name="Fraser A."/>
            <person name="Garcia J.L."/>
            <person name="Garcia M.J."/>
            <person name="Goble A."/>
            <person name="Goldman G.H."/>
            <person name="Gomi K."/>
            <person name="Griffith-Jones S."/>
            <person name="Gwilliam R."/>
            <person name="Haas B.J."/>
            <person name="Haas H."/>
            <person name="Harris D.E."/>
            <person name="Horiuchi H."/>
            <person name="Huang J."/>
            <person name="Humphray S."/>
            <person name="Jimenez J."/>
            <person name="Keller N."/>
            <person name="Khouri H."/>
            <person name="Kitamoto K."/>
            <person name="Kobayashi T."/>
            <person name="Konzack S."/>
            <person name="Kulkarni R."/>
            <person name="Kumagai T."/>
            <person name="Lafton A."/>
            <person name="Latge J.-P."/>
            <person name="Li W."/>
            <person name="Lord A."/>
            <person name="Lu C."/>
            <person name="Majoros W.H."/>
            <person name="May G.S."/>
            <person name="Miller B.L."/>
            <person name="Mohamoud Y."/>
            <person name="Molina M."/>
            <person name="Monod M."/>
            <person name="Mouyna I."/>
            <person name="Mulligan S."/>
            <person name="Murphy L.D."/>
            <person name="O'Neil S."/>
            <person name="Paulsen I."/>
            <person name="Penalva M.A."/>
            <person name="Pertea M."/>
            <person name="Price C."/>
            <person name="Pritchard B.L."/>
            <person name="Quail M.A."/>
            <person name="Rabbinowitsch E."/>
            <person name="Rawlins N."/>
            <person name="Rajandream M.A."/>
            <person name="Reichard U."/>
            <person name="Renauld H."/>
            <person name="Robson G.D."/>
            <person name="Rodriguez de Cordoba S."/>
            <person name="Rodriguez-Pena J.M."/>
            <person name="Ronning C.M."/>
            <person name="Rutter S."/>
            <person name="Salzberg S.L."/>
            <person name="Sanchez M."/>
            <person name="Sanchez-Ferrero J.C."/>
            <person name="Saunders D."/>
            <person name="Seeger K."/>
            <person name="Squares R."/>
            <person name="Squares S."/>
            <person name="Takeuchi M."/>
            <person name="Tekaia F."/>
            <person name="Turner G."/>
            <person name="Vazquez de Aldana C.R."/>
            <person name="Weidman J."/>
            <person name="White O."/>
            <person name="Woodward J.R."/>
            <person name="Yu J.-H."/>
            <person name="Fraser C.M."/>
            <person name="Galagan J.E."/>
            <person name="Asai K."/>
            <person name="Machida M."/>
            <person name="Hall N."/>
            <person name="Barrell B.G."/>
            <person name="Denning D.W."/>
        </authorList>
    </citation>
    <scope>NUCLEOTIDE SEQUENCE [LARGE SCALE GENOMIC DNA]</scope>
    <source>
        <strain>ATCC MYA-4609 / CBS 101355 / FGSC A1100 / Af293</strain>
    </source>
</reference>
<reference key="2">
    <citation type="journal article" date="2023" name="Chem. Sci.">
        <title>A heterologous expression platform in Aspergillus nidulans for the elucidation of cryptic secondary metabolism biosynthetic gene clusters: discovery of the Aspergillus fumigatus sartorypyrone biosynthetic pathway.</title>
        <authorList>
            <person name="Lin S.Y."/>
            <person name="Oakley C.E."/>
            <person name="Jenkinson C.B."/>
            <person name="Chiang Y.M."/>
            <person name="Lee C.K."/>
            <person name="Jones C.G."/>
            <person name="Seidler P.M."/>
            <person name="Nelson H.M."/>
            <person name="Todd R.B."/>
            <person name="Wang C.C.C."/>
            <person name="Oakley B.R."/>
        </authorList>
    </citation>
    <scope>FUNCTION</scope>
    <scope>DISRUPTION PHENOTYPE</scope>
    <scope>CATALYTIC ACTIVITY</scope>
    <scope>PATHWAY</scope>
</reference>
<feature type="chain" id="PRO_0000461222" description="Geranylgeranyl pyrophosphate synthase spyE">
    <location>
        <begin position="1"/>
        <end position="357"/>
    </location>
</feature>
<feature type="region of interest" description="Disordered" evidence="2">
    <location>
        <begin position="36"/>
        <end position="60"/>
    </location>
</feature>
<feature type="compositionally biased region" description="Polar residues" evidence="2">
    <location>
        <begin position="50"/>
        <end position="59"/>
    </location>
</feature>
<feature type="binding site" evidence="1">
    <location>
        <position position="84"/>
    </location>
    <ligand>
        <name>isopentenyl diphosphate</name>
        <dbReference type="ChEBI" id="CHEBI:128769"/>
    </ligand>
</feature>
<feature type="binding site" evidence="1">
    <location>
        <position position="87"/>
    </location>
    <ligand>
        <name>isopentenyl diphosphate</name>
        <dbReference type="ChEBI" id="CHEBI:128769"/>
    </ligand>
</feature>
<feature type="binding site" evidence="1">
    <location>
        <position position="116"/>
    </location>
    <ligand>
        <name>isopentenyl diphosphate</name>
        <dbReference type="ChEBI" id="CHEBI:128769"/>
    </ligand>
</feature>
<feature type="binding site" evidence="1">
    <location>
        <position position="123"/>
    </location>
    <ligand>
        <name>Mg(2+)</name>
        <dbReference type="ChEBI" id="CHEBI:18420"/>
        <label>1</label>
    </ligand>
</feature>
<feature type="binding site" evidence="1">
    <location>
        <position position="123"/>
    </location>
    <ligand>
        <name>Mg(2+)</name>
        <dbReference type="ChEBI" id="CHEBI:18420"/>
        <label>2</label>
    </ligand>
</feature>
<feature type="binding site" evidence="1">
    <location>
        <position position="127"/>
    </location>
    <ligand>
        <name>Mg(2+)</name>
        <dbReference type="ChEBI" id="CHEBI:18420"/>
        <label>1</label>
    </ligand>
</feature>
<feature type="binding site" evidence="1">
    <location>
        <position position="127"/>
    </location>
    <ligand>
        <name>Mg(2+)</name>
        <dbReference type="ChEBI" id="CHEBI:18420"/>
        <label>2</label>
    </ligand>
</feature>
<feature type="binding site" evidence="1">
    <location>
        <position position="132"/>
    </location>
    <ligand>
        <name>dimethylallyl diphosphate</name>
        <dbReference type="ChEBI" id="CHEBI:57623"/>
    </ligand>
</feature>
<feature type="binding site" evidence="1">
    <location>
        <position position="133"/>
    </location>
    <ligand>
        <name>isopentenyl diphosphate</name>
        <dbReference type="ChEBI" id="CHEBI:128769"/>
    </ligand>
</feature>
<feature type="binding site" evidence="1">
    <location>
        <position position="210"/>
    </location>
    <ligand>
        <name>dimethylallyl diphosphate</name>
        <dbReference type="ChEBI" id="CHEBI:57623"/>
    </ligand>
</feature>
<feature type="binding site" evidence="1">
    <location>
        <position position="211"/>
    </location>
    <ligand>
        <name>dimethylallyl diphosphate</name>
        <dbReference type="ChEBI" id="CHEBI:57623"/>
    </ligand>
</feature>
<feature type="binding site" evidence="1">
    <location>
        <position position="244"/>
    </location>
    <ligand>
        <name>dimethylallyl diphosphate</name>
        <dbReference type="ChEBI" id="CHEBI:57623"/>
    </ligand>
</feature>
<feature type="binding site" evidence="1">
    <location>
        <position position="247"/>
    </location>
    <ligand>
        <name>Mg(2+)</name>
        <dbReference type="ChEBI" id="CHEBI:18420"/>
        <label>3</label>
    </ligand>
</feature>
<feature type="binding site" evidence="1">
    <location>
        <position position="251"/>
    </location>
    <ligand>
        <name>dimethylallyl diphosphate</name>
        <dbReference type="ChEBI" id="CHEBI:57623"/>
    </ligand>
</feature>
<feature type="binding site" evidence="1">
    <location>
        <position position="261"/>
    </location>
    <ligand>
        <name>dimethylallyl diphosphate</name>
        <dbReference type="ChEBI" id="CHEBI:57623"/>
    </ligand>
</feature>
<feature type="binding site" evidence="1">
    <location>
        <position position="271"/>
    </location>
    <ligand>
        <name>dimethylallyl diphosphate</name>
        <dbReference type="ChEBI" id="CHEBI:57623"/>
    </ligand>
</feature>
<organism>
    <name type="scientific">Aspergillus fumigatus (strain ATCC MYA-4609 / CBS 101355 / FGSC A1100 / Af293)</name>
    <name type="common">Neosartorya fumigata</name>
    <dbReference type="NCBI Taxonomy" id="330879"/>
    <lineage>
        <taxon>Eukaryota</taxon>
        <taxon>Fungi</taxon>
        <taxon>Dikarya</taxon>
        <taxon>Ascomycota</taxon>
        <taxon>Pezizomycotina</taxon>
        <taxon>Eurotiomycetes</taxon>
        <taxon>Eurotiomycetidae</taxon>
        <taxon>Eurotiales</taxon>
        <taxon>Aspergillaceae</taxon>
        <taxon>Aspergillus</taxon>
        <taxon>Aspergillus subgen. Fumigati</taxon>
    </lineage>
</organism>